<proteinExistence type="inferred from homology"/>
<protein>
    <recommendedName>
        <fullName evidence="1">Serine/threonine transporter SstT</fullName>
    </recommendedName>
    <alternativeName>
        <fullName evidence="1">Na(+)/serine-threonine symporter</fullName>
    </alternativeName>
</protein>
<comment type="function">
    <text evidence="1">Involved in the import of serine and threonine into the cell, with the concomitant import of sodium (symport system).</text>
</comment>
<comment type="catalytic activity">
    <reaction evidence="1">
        <text>L-serine(in) + Na(+)(in) = L-serine(out) + Na(+)(out)</text>
        <dbReference type="Rhea" id="RHEA:29575"/>
        <dbReference type="ChEBI" id="CHEBI:29101"/>
        <dbReference type="ChEBI" id="CHEBI:33384"/>
    </reaction>
    <physiologicalReaction direction="right-to-left" evidence="1">
        <dbReference type="Rhea" id="RHEA:29577"/>
    </physiologicalReaction>
</comment>
<comment type="catalytic activity">
    <reaction evidence="1">
        <text>L-threonine(in) + Na(+)(in) = L-threonine(out) + Na(+)(out)</text>
        <dbReference type="Rhea" id="RHEA:69999"/>
        <dbReference type="ChEBI" id="CHEBI:29101"/>
        <dbReference type="ChEBI" id="CHEBI:57926"/>
    </reaction>
    <physiologicalReaction direction="right-to-left" evidence="1">
        <dbReference type="Rhea" id="RHEA:70001"/>
    </physiologicalReaction>
</comment>
<comment type="subcellular location">
    <subcellularLocation>
        <location evidence="1">Cell membrane</location>
        <topology evidence="1">Multi-pass membrane protein</topology>
    </subcellularLocation>
</comment>
<comment type="similarity">
    <text evidence="1">Belongs to the dicarboxylate/amino acid:cation symporter (DAACS) (TC 2.A.23) family.</text>
</comment>
<keyword id="KW-0029">Amino-acid transport</keyword>
<keyword id="KW-1003">Cell membrane</keyword>
<keyword id="KW-0472">Membrane</keyword>
<keyword id="KW-0769">Symport</keyword>
<keyword id="KW-0812">Transmembrane</keyword>
<keyword id="KW-1133">Transmembrane helix</keyword>
<keyword id="KW-0813">Transport</keyword>
<sequence length="434" mass="45640">MYKRYKDVSLILKIVIGIIVGAVLGVMVPSWSFIDVLGKLFVGALKAIAPLLVFLLIMSAISKYRSGAKNHFGTVIVLYLSATLFSSIAAVAVSYLFPIKLVLPGAMKIAESAPKDLGTVVTSLLTNAVANPISALVEGNYLAILFWSLLIGSGLRLTSAVTKKVVTELADTVSAVAQNVIQFAPFGIVGLLHESLSKTGVKGVMAYGQLLMLLVATMVFVYLVVYPFMVWLMTRKNPYPLTFWTLKVSGIPAFFTRSGAVNIPINLKASKDLGLNEESYAISIPLGGSANSGGAAITVSIMTLATANTMGVHVSIFLALLLCFLSAISATGVSGIAGGSLLLIPMAASLFGISNDIAMQVVGIGFIIGVVQDSVETAVNSASDLLFTATAEYADDRREGHPVDIRAKVKAAGKGTAEVVTPEKTNEAEESEQV</sequence>
<feature type="chain" id="PRO_1000197553" description="Serine/threonine transporter SstT">
    <location>
        <begin position="1"/>
        <end position="434"/>
    </location>
</feature>
<feature type="transmembrane region" description="Helical" evidence="1">
    <location>
        <begin position="14"/>
        <end position="34"/>
    </location>
</feature>
<feature type="transmembrane region" description="Helical" evidence="1">
    <location>
        <begin position="41"/>
        <end position="61"/>
    </location>
</feature>
<feature type="transmembrane region" description="Helical" evidence="1">
    <location>
        <begin position="72"/>
        <end position="92"/>
    </location>
</feature>
<feature type="transmembrane region" description="Helical" evidence="1">
    <location>
        <begin position="135"/>
        <end position="155"/>
    </location>
</feature>
<feature type="transmembrane region" description="Helical" evidence="1">
    <location>
        <begin position="172"/>
        <end position="192"/>
    </location>
</feature>
<feature type="transmembrane region" description="Helical" evidence="1">
    <location>
        <begin position="210"/>
        <end position="230"/>
    </location>
</feature>
<feature type="transmembrane region" description="Helical" evidence="1">
    <location>
        <begin position="282"/>
        <end position="302"/>
    </location>
</feature>
<feature type="transmembrane region" description="Helical" evidence="1">
    <location>
        <begin position="316"/>
        <end position="336"/>
    </location>
</feature>
<feature type="transmembrane region" description="Helical" evidence="1">
    <location>
        <begin position="351"/>
        <end position="371"/>
    </location>
</feature>
<feature type="region of interest" description="Disordered" evidence="2">
    <location>
        <begin position="413"/>
        <end position="434"/>
    </location>
</feature>
<accession>B3W6Y1</accession>
<organism>
    <name type="scientific">Lacticaseibacillus casei (strain BL23)</name>
    <name type="common">Lactobacillus casei</name>
    <dbReference type="NCBI Taxonomy" id="543734"/>
    <lineage>
        <taxon>Bacteria</taxon>
        <taxon>Bacillati</taxon>
        <taxon>Bacillota</taxon>
        <taxon>Bacilli</taxon>
        <taxon>Lactobacillales</taxon>
        <taxon>Lactobacillaceae</taxon>
        <taxon>Lacticaseibacillus</taxon>
    </lineage>
</organism>
<gene>
    <name evidence="1" type="primary">sstT</name>
    <name type="ordered locus">LCABL_06910</name>
</gene>
<evidence type="ECO:0000255" key="1">
    <source>
        <dbReference type="HAMAP-Rule" id="MF_01582"/>
    </source>
</evidence>
<evidence type="ECO:0000256" key="2">
    <source>
        <dbReference type="SAM" id="MobiDB-lite"/>
    </source>
</evidence>
<dbReference type="EMBL" id="FM177140">
    <property type="protein sequence ID" value="CAQ65816.1"/>
    <property type="molecule type" value="Genomic_DNA"/>
</dbReference>
<dbReference type="SMR" id="B3W6Y1"/>
<dbReference type="KEGG" id="lcb:LCABL_06910"/>
<dbReference type="HOGENOM" id="CLU_044581_0_0_9"/>
<dbReference type="GO" id="GO:0005886">
    <property type="term" value="C:plasma membrane"/>
    <property type="evidence" value="ECO:0007669"/>
    <property type="project" value="UniProtKB-SubCell"/>
</dbReference>
<dbReference type="GO" id="GO:0015171">
    <property type="term" value="F:amino acid transmembrane transporter activity"/>
    <property type="evidence" value="ECO:0007669"/>
    <property type="project" value="UniProtKB-UniRule"/>
</dbReference>
<dbReference type="GO" id="GO:0015293">
    <property type="term" value="F:symporter activity"/>
    <property type="evidence" value="ECO:0007669"/>
    <property type="project" value="UniProtKB-UniRule"/>
</dbReference>
<dbReference type="GO" id="GO:0032329">
    <property type="term" value="P:serine transport"/>
    <property type="evidence" value="ECO:0007669"/>
    <property type="project" value="InterPro"/>
</dbReference>
<dbReference type="GO" id="GO:0015826">
    <property type="term" value="P:threonine transport"/>
    <property type="evidence" value="ECO:0007669"/>
    <property type="project" value="InterPro"/>
</dbReference>
<dbReference type="Gene3D" id="1.10.3860.10">
    <property type="entry name" value="Sodium:dicarboxylate symporter"/>
    <property type="match status" value="1"/>
</dbReference>
<dbReference type="HAMAP" id="MF_01582">
    <property type="entry name" value="Ser_Thr_transp_SstT"/>
    <property type="match status" value="1"/>
</dbReference>
<dbReference type="InterPro" id="IPR001991">
    <property type="entry name" value="Na-dicarboxylate_symporter"/>
</dbReference>
<dbReference type="InterPro" id="IPR036458">
    <property type="entry name" value="Na:dicarbo_symporter_sf"/>
</dbReference>
<dbReference type="InterPro" id="IPR023025">
    <property type="entry name" value="Ser_Thr_transp_SstT"/>
</dbReference>
<dbReference type="NCBIfam" id="NF010151">
    <property type="entry name" value="PRK13628.1"/>
    <property type="match status" value="1"/>
</dbReference>
<dbReference type="PANTHER" id="PTHR42865">
    <property type="entry name" value="PROTON/GLUTAMATE-ASPARTATE SYMPORTER"/>
    <property type="match status" value="1"/>
</dbReference>
<dbReference type="PANTHER" id="PTHR42865:SF7">
    <property type="entry name" value="PROTON_GLUTAMATE-ASPARTATE SYMPORTER"/>
    <property type="match status" value="1"/>
</dbReference>
<dbReference type="Pfam" id="PF00375">
    <property type="entry name" value="SDF"/>
    <property type="match status" value="1"/>
</dbReference>
<dbReference type="PRINTS" id="PR00173">
    <property type="entry name" value="EDTRNSPORT"/>
</dbReference>
<dbReference type="SUPFAM" id="SSF118215">
    <property type="entry name" value="Proton glutamate symport protein"/>
    <property type="match status" value="1"/>
</dbReference>
<name>SSTT_LACCB</name>
<reference key="1">
    <citation type="submission" date="2008-06" db="EMBL/GenBank/DDBJ databases">
        <title>Lactobacillus casei BL23 complete genome sequence.</title>
        <authorList>
            <person name="Maze A."/>
            <person name="Boel G."/>
            <person name="Bourand A."/>
            <person name="Loux V."/>
            <person name="Gibrat J.F."/>
            <person name="Zuniga M."/>
            <person name="Hartke A."/>
            <person name="Deutscher J."/>
        </authorList>
    </citation>
    <scope>NUCLEOTIDE SEQUENCE [LARGE SCALE GENOMIC DNA]</scope>
    <source>
        <strain>BL23</strain>
    </source>
</reference>